<protein>
    <recommendedName>
        <fullName>CCR4-NOT transcription complex subunit 6</fullName>
        <ecNumber evidence="4">3.1.13.4</ecNumber>
    </recommendedName>
    <alternativeName>
        <fullName>CCR4 carbon catabolite repression 4-like</fullName>
    </alternativeName>
    <alternativeName>
        <fullName>Carbon catabolite repressor protein 4 homolog</fullName>
    </alternativeName>
    <alternativeName>
        <fullName>Cytoplasmic deadenylase</fullName>
    </alternativeName>
</protein>
<evidence type="ECO:0000250" key="1"/>
<evidence type="ECO:0000250" key="2">
    <source>
        <dbReference type="UniProtKB" id="Q8K3P5"/>
    </source>
</evidence>
<evidence type="ECO:0000250" key="3">
    <source>
        <dbReference type="UniProtKB" id="Q96LI5"/>
    </source>
</evidence>
<evidence type="ECO:0000250" key="4">
    <source>
        <dbReference type="UniProtKB" id="Q9ULM6"/>
    </source>
</evidence>
<evidence type="ECO:0000305" key="5"/>
<keyword id="KW-0010">Activator</keyword>
<keyword id="KW-0963">Cytoplasm</keyword>
<keyword id="KW-0269">Exonuclease</keyword>
<keyword id="KW-0378">Hydrolase</keyword>
<keyword id="KW-0433">Leucine-rich repeat</keyword>
<keyword id="KW-0460">Magnesium</keyword>
<keyword id="KW-0479">Metal-binding</keyword>
<keyword id="KW-0540">Nuclease</keyword>
<keyword id="KW-0539">Nucleus</keyword>
<keyword id="KW-1185">Reference proteome</keyword>
<keyword id="KW-0677">Repeat</keyword>
<keyword id="KW-0694">RNA-binding</keyword>
<keyword id="KW-0943">RNA-mediated gene silencing</keyword>
<keyword id="KW-0804">Transcription</keyword>
<keyword id="KW-0805">Transcription regulation</keyword>
<keyword id="KW-0810">Translation regulation</keyword>
<organism>
    <name type="scientific">Rattus norvegicus</name>
    <name type="common">Rat</name>
    <dbReference type="NCBI Taxonomy" id="10116"/>
    <lineage>
        <taxon>Eukaryota</taxon>
        <taxon>Metazoa</taxon>
        <taxon>Chordata</taxon>
        <taxon>Craniata</taxon>
        <taxon>Vertebrata</taxon>
        <taxon>Euteleostomi</taxon>
        <taxon>Mammalia</taxon>
        <taxon>Eutheria</taxon>
        <taxon>Euarchontoglires</taxon>
        <taxon>Glires</taxon>
        <taxon>Rodentia</taxon>
        <taxon>Myomorpha</taxon>
        <taxon>Muroidea</taxon>
        <taxon>Muridae</taxon>
        <taxon>Murinae</taxon>
        <taxon>Rattus</taxon>
    </lineage>
</organism>
<proteinExistence type="evidence at transcript level"/>
<gene>
    <name type="primary">Cnot6</name>
    <name type="synonym">Ccr4</name>
</gene>
<dbReference type="EC" id="3.1.13.4" evidence="4"/>
<dbReference type="EMBL" id="BC079308">
    <property type="protein sequence ID" value="AAH79308.1"/>
    <property type="molecule type" value="mRNA"/>
</dbReference>
<dbReference type="RefSeq" id="NP_001013878.1">
    <property type="nucleotide sequence ID" value="NM_001013856.1"/>
</dbReference>
<dbReference type="RefSeq" id="NP_001380807.1">
    <property type="nucleotide sequence ID" value="NM_001393878.1"/>
</dbReference>
<dbReference type="RefSeq" id="XP_038941302.1">
    <property type="nucleotide sequence ID" value="XM_039085374.1"/>
</dbReference>
<dbReference type="RefSeq" id="XP_063124645.1">
    <property type="nucleotide sequence ID" value="XM_063268575.1"/>
</dbReference>
<dbReference type="SMR" id="Q6AXU9"/>
<dbReference type="FunCoup" id="Q6AXU9">
    <property type="interactions" value="2991"/>
</dbReference>
<dbReference type="STRING" id="10116.ENSRNOP00000075273"/>
<dbReference type="PhosphoSitePlus" id="Q6AXU9"/>
<dbReference type="PaxDb" id="10116-ENSRNOP00000003752"/>
<dbReference type="Ensembl" id="ENSRNOT00000084509.2">
    <property type="protein sequence ID" value="ENSRNOP00000074431.2"/>
    <property type="gene ID" value="ENSRNOG00000054891.2"/>
</dbReference>
<dbReference type="GeneID" id="287249"/>
<dbReference type="UCSC" id="RGD:1310783">
    <property type="organism name" value="rat"/>
</dbReference>
<dbReference type="AGR" id="RGD:1310783"/>
<dbReference type="RGD" id="1310783">
    <property type="gene designation" value="Cnot6"/>
</dbReference>
<dbReference type="eggNOG" id="KOG0620">
    <property type="taxonomic scope" value="Eukaryota"/>
</dbReference>
<dbReference type="GeneTree" id="ENSGT00940000158978"/>
<dbReference type="InParanoid" id="Q6AXU9"/>
<dbReference type="PhylomeDB" id="Q6AXU9"/>
<dbReference type="Reactome" id="R-RNO-6804115">
    <property type="pathway name" value="TP53 regulates transcription of additional cell cycle genes whose exact role in the p53 pathway remain uncertain"/>
</dbReference>
<dbReference type="PRO" id="PR:Q6AXU9"/>
<dbReference type="Proteomes" id="UP000002494">
    <property type="component" value="Chromosome 10"/>
</dbReference>
<dbReference type="GO" id="GO:0030014">
    <property type="term" value="C:CCR4-NOT complex"/>
    <property type="evidence" value="ECO:0000250"/>
    <property type="project" value="UniProtKB"/>
</dbReference>
<dbReference type="GO" id="GO:0005737">
    <property type="term" value="C:cytoplasm"/>
    <property type="evidence" value="ECO:0007669"/>
    <property type="project" value="UniProtKB-SubCell"/>
</dbReference>
<dbReference type="GO" id="GO:0005634">
    <property type="term" value="C:nucleus"/>
    <property type="evidence" value="ECO:0007669"/>
    <property type="project" value="UniProtKB-SubCell"/>
</dbReference>
<dbReference type="GO" id="GO:0000175">
    <property type="term" value="F:3'-5'-RNA exonuclease activity"/>
    <property type="evidence" value="ECO:0000318"/>
    <property type="project" value="GO_Central"/>
</dbReference>
<dbReference type="GO" id="GO:0046872">
    <property type="term" value="F:metal ion binding"/>
    <property type="evidence" value="ECO:0007669"/>
    <property type="project" value="UniProtKB-KW"/>
</dbReference>
<dbReference type="GO" id="GO:0004535">
    <property type="term" value="F:poly(A)-specific ribonuclease activity"/>
    <property type="evidence" value="ECO:0000250"/>
    <property type="project" value="UniProtKB"/>
</dbReference>
<dbReference type="GO" id="GO:0003723">
    <property type="term" value="F:RNA binding"/>
    <property type="evidence" value="ECO:0007669"/>
    <property type="project" value="UniProtKB-KW"/>
</dbReference>
<dbReference type="GO" id="GO:0004532">
    <property type="term" value="F:RNA exonuclease activity"/>
    <property type="evidence" value="ECO:0000250"/>
    <property type="project" value="UniProtKB"/>
</dbReference>
<dbReference type="GO" id="GO:0003713">
    <property type="term" value="F:transcription coactivator activity"/>
    <property type="evidence" value="ECO:0000250"/>
    <property type="project" value="UniProtKB"/>
</dbReference>
<dbReference type="GO" id="GO:0035279">
    <property type="term" value="P:miRNA-mediated gene silencing by mRNA destabilization"/>
    <property type="evidence" value="ECO:0000250"/>
    <property type="project" value="UniProtKB"/>
</dbReference>
<dbReference type="GO" id="GO:0070966">
    <property type="term" value="P:nuclear-transcribed mRNA catabolic process, no-go decay"/>
    <property type="evidence" value="ECO:0000250"/>
    <property type="project" value="UniProtKB"/>
</dbReference>
<dbReference type="GO" id="GO:0000289">
    <property type="term" value="P:nuclear-transcribed mRNA poly(A) tail shortening"/>
    <property type="evidence" value="ECO:0000250"/>
    <property type="project" value="UniProtKB"/>
</dbReference>
<dbReference type="GO" id="GO:0008284">
    <property type="term" value="P:positive regulation of cell population proliferation"/>
    <property type="evidence" value="ECO:0000266"/>
    <property type="project" value="RGD"/>
</dbReference>
<dbReference type="GO" id="GO:0010606">
    <property type="term" value="P:positive regulation of cytoplasmic mRNA processing body assembly"/>
    <property type="evidence" value="ECO:0000266"/>
    <property type="project" value="RGD"/>
</dbReference>
<dbReference type="GO" id="GO:0006417">
    <property type="term" value="P:regulation of translation"/>
    <property type="evidence" value="ECO:0007669"/>
    <property type="project" value="UniProtKB-KW"/>
</dbReference>
<dbReference type="CDD" id="cd10313">
    <property type="entry name" value="Deadenylase_CCR4a"/>
    <property type="match status" value="1"/>
</dbReference>
<dbReference type="FunFam" id="3.60.10.10:FF:000002">
    <property type="entry name" value="CCR4-NOT transcription complex subunit 6 like"/>
    <property type="match status" value="1"/>
</dbReference>
<dbReference type="FunFam" id="3.80.10.10:FF:000008">
    <property type="entry name" value="CCR4-NOT transcription complex subunit 6 like"/>
    <property type="match status" value="1"/>
</dbReference>
<dbReference type="Gene3D" id="3.60.10.10">
    <property type="entry name" value="Endonuclease/exonuclease/phosphatase"/>
    <property type="match status" value="1"/>
</dbReference>
<dbReference type="Gene3D" id="3.80.10.10">
    <property type="entry name" value="Ribonuclease Inhibitor"/>
    <property type="match status" value="1"/>
</dbReference>
<dbReference type="InterPro" id="IPR050410">
    <property type="entry name" value="CCR4/nocturin_mRNA_transcr"/>
</dbReference>
<dbReference type="InterPro" id="IPR034966">
    <property type="entry name" value="Cnot6"/>
</dbReference>
<dbReference type="InterPro" id="IPR036691">
    <property type="entry name" value="Endo/exonu/phosph_ase_sf"/>
</dbReference>
<dbReference type="InterPro" id="IPR005135">
    <property type="entry name" value="Endo/exonuclease/phosphatase"/>
</dbReference>
<dbReference type="InterPro" id="IPR001611">
    <property type="entry name" value="Leu-rich_rpt"/>
</dbReference>
<dbReference type="InterPro" id="IPR003591">
    <property type="entry name" value="Leu-rich_rpt_typical-subtyp"/>
</dbReference>
<dbReference type="InterPro" id="IPR032675">
    <property type="entry name" value="LRR_dom_sf"/>
</dbReference>
<dbReference type="PANTHER" id="PTHR12121">
    <property type="entry name" value="CARBON CATABOLITE REPRESSOR PROTEIN 4"/>
    <property type="match status" value="1"/>
</dbReference>
<dbReference type="PANTHER" id="PTHR12121:SF33">
    <property type="entry name" value="CCR4-NOT TRANSCRIPTION COMPLEX SUBUNIT 6"/>
    <property type="match status" value="1"/>
</dbReference>
<dbReference type="Pfam" id="PF03372">
    <property type="entry name" value="Exo_endo_phos"/>
    <property type="match status" value="1"/>
</dbReference>
<dbReference type="Pfam" id="PF13855">
    <property type="entry name" value="LRR_8"/>
    <property type="match status" value="1"/>
</dbReference>
<dbReference type="SMART" id="SM00369">
    <property type="entry name" value="LRR_TYP"/>
    <property type="match status" value="3"/>
</dbReference>
<dbReference type="SUPFAM" id="SSF56219">
    <property type="entry name" value="DNase I-like"/>
    <property type="match status" value="1"/>
</dbReference>
<dbReference type="SUPFAM" id="SSF52058">
    <property type="entry name" value="L domain-like"/>
    <property type="match status" value="1"/>
</dbReference>
<dbReference type="PROSITE" id="PS51450">
    <property type="entry name" value="LRR"/>
    <property type="match status" value="4"/>
</dbReference>
<reference key="1">
    <citation type="journal article" date="2004" name="Genome Res.">
        <title>The status, quality, and expansion of the NIH full-length cDNA project: the Mammalian Gene Collection (MGC).</title>
        <authorList>
            <consortium name="The MGC Project Team"/>
        </authorList>
    </citation>
    <scope>NUCLEOTIDE SEQUENCE [LARGE SCALE MRNA]</scope>
    <source>
        <tissue>Testis</tissue>
    </source>
</reference>
<name>CNOT6_RAT</name>
<comment type="function">
    <text evidence="4">Poly(A) nuclease with 3'-5' RNase activity. Catalytic component of the CCR4-NOT complex which is one of the major cellular mRNA deadenylases and is linked to various cellular processes including bulk mRNA degradation, miRNA-mediated repression, translational repression during translational initiation and general transcription regulation. Additional complex functions may be a consequence of its influence on mRNA expression. Involved in mRNA decay mediated by the major-protein-coding determinant of instability (mCRD) of the FOS gene in the cytoplasm. In the presence of ZNF335, enhances ligand-dependent transcriptional activity of nuclear hormone receptors. Mediates cell proliferation and cell survival and prevents cellular senescence.</text>
</comment>
<comment type="catalytic activity">
    <reaction evidence="4">
        <text>Exonucleolytic cleavage of poly(A) to 5'-AMP.</text>
        <dbReference type="EC" id="3.1.13.4"/>
    </reaction>
</comment>
<comment type="cofactor">
    <cofactor evidence="3">
        <name>Mg(2+)</name>
        <dbReference type="ChEBI" id="CHEBI:18420"/>
    </cofactor>
    <text evidence="3">Binds 2 magnesium ions, but the ions interact each with only 1 or 2 residues.</text>
</comment>
<comment type="subunit">
    <text evidence="2 4">Component of the CCR4-NOT complex; distinct complexes seem to exist that differ in the participation of probably mutually exclusive catalytic subunits; the complex contains two deadenylase subunits, CNOT6 or CNOT6L, and CNOT7 or CNOT8. Interacts with CNOT7 and CNOT8. Interacts with UNR. Interacts with ZFP36L1 (via N-terminus). Interacts with ZNF335.</text>
</comment>
<comment type="subcellular location">
    <subcellularLocation>
        <location evidence="3">Cytoplasm</location>
    </subcellularLocation>
    <subcellularLocation>
        <location evidence="3">Nucleus</location>
    </subcellularLocation>
    <text evidence="3">Predominantly cytoplasmic.</text>
</comment>
<comment type="similarity">
    <text evidence="5">Belongs to the CCR4/nocturin family.</text>
</comment>
<sequence length="557" mass="63304">MPKEKYEPPDPRRMYTIMSSEEAANGKKSHWAELEISGKVRSLSSSLWSLTHLTALHLSDNSLSCIPSDIAKLHNLVYLDLSHNQIQSLPAELGNMVSLRELHLNYNQLRVLPFELGKLFQLQTLSLKGNPLTQDILNLCLEPDGTRRLLNYLLDNLSGTAKRISTEQPPPRSWIMLQEPDRTRPTALFSVMCYNVLCDKYATRQLYGYCPSWALNWDYRKKAIIQEILSCNADIISLQEVETEQYYSFFLVELKERGYNGFFSPKSRARTMSEQERKHVDGCAIFFKTEKFTLVQKHTVEFNQLAMANSEGSEAMLNRVMTKDNIGVAVLLELRKELIEMSSGKPHLGTEKQLILVANAHMHWDPEYSDVKLVQTMMFLSEVKNIIDKASRSLKSSVLGECGTIPLVLCADLNSLPDSGVVEYLSTGGVETNHKDFKELRYNESLTNFSCNGKNGMTNGRITHGFKLKSAYENGLMPYTNYTFDFKGIIDYIFYSKPQLNTLAILGPLDHHWLVENNISGCPHPLIPSDHFSLFAQLELLLPFLPQVNGIHLPGRR</sequence>
<feature type="chain" id="PRO_0000218575" description="CCR4-NOT transcription complex subunit 6">
    <location>
        <begin position="1"/>
        <end position="557"/>
    </location>
</feature>
<feature type="repeat" description="LRR 1">
    <location>
        <begin position="52"/>
        <end position="73"/>
    </location>
</feature>
<feature type="repeat" description="LRR 2">
    <location>
        <begin position="75"/>
        <end position="96"/>
    </location>
</feature>
<feature type="repeat" description="LRR 3">
    <location>
        <begin position="98"/>
        <end position="120"/>
    </location>
</feature>
<feature type="repeat" description="LRR 4">
    <location>
        <begin position="121"/>
        <end position="143"/>
    </location>
</feature>
<feature type="region of interest" description="Nuclease domain" evidence="1">
    <location>
        <begin position="153"/>
        <end position="557"/>
    </location>
</feature>
<feature type="active site" description="Proton donor/acceptor" evidence="3">
    <location>
        <position position="412"/>
    </location>
</feature>
<feature type="binding site" evidence="3">
    <location>
        <position position="240"/>
    </location>
    <ligand>
        <name>Mg(2+)</name>
        <dbReference type="ChEBI" id="CHEBI:18420"/>
        <label>1</label>
    </ligand>
</feature>
<feature type="binding site" evidence="3">
    <location>
        <position position="240"/>
    </location>
    <ligand>
        <name>substrate</name>
    </ligand>
</feature>
<feature type="binding site" evidence="3">
    <location>
        <position position="276"/>
    </location>
    <ligand>
        <name>substrate</name>
    </ligand>
</feature>
<feature type="binding site" evidence="3">
    <location>
        <position position="361"/>
    </location>
    <ligand>
        <name>substrate</name>
    </ligand>
</feature>
<feature type="binding site" evidence="3">
    <location>
        <position position="366"/>
    </location>
    <ligand>
        <name>substrate</name>
    </ligand>
</feature>
<feature type="binding site" evidence="3">
    <location>
        <position position="412"/>
    </location>
    <ligand>
        <name>Mg(2+)</name>
        <dbReference type="ChEBI" id="CHEBI:18420"/>
        <label>2</label>
    </ligand>
</feature>
<feature type="binding site" evidence="3">
    <location>
        <position position="414"/>
    </location>
    <ligand>
        <name>substrate</name>
    </ligand>
</feature>
<feature type="binding site" evidence="3">
    <location>
        <position position="481"/>
    </location>
    <ligand>
        <name>substrate</name>
    </ligand>
</feature>
<feature type="binding site" evidence="3">
    <location>
        <position position="486"/>
    </location>
    <ligand>
        <name>substrate</name>
    </ligand>
</feature>
<accession>Q6AXU9</accession>